<organism>
    <name type="scientific">Lactococcus lactis subsp. cremoris</name>
    <name type="common">Streptococcus cremoris</name>
    <dbReference type="NCBI Taxonomy" id="1359"/>
    <lineage>
        <taxon>Bacteria</taxon>
        <taxon>Bacillati</taxon>
        <taxon>Bacillota</taxon>
        <taxon>Bacilli</taxon>
        <taxon>Lactobacillales</taxon>
        <taxon>Streptococcaceae</taxon>
        <taxon>Lactococcus</taxon>
    </lineage>
</organism>
<keyword id="KW-0028">Amino-acid biosynthesis</keyword>
<keyword id="KW-0067">ATP-binding</keyword>
<keyword id="KW-0963">Cytoplasm</keyword>
<keyword id="KW-0418">Kinase</keyword>
<keyword id="KW-0547">Nucleotide-binding</keyword>
<keyword id="KW-0791">Threonine biosynthesis</keyword>
<keyword id="KW-0808">Transferase</keyword>
<protein>
    <recommendedName>
        <fullName>Homoserine kinase</fullName>
        <shortName>HK</shortName>
        <shortName>HSK</shortName>
        <ecNumber>2.7.1.39</ecNumber>
    </recommendedName>
</protein>
<dbReference type="EC" id="2.7.1.39"/>
<dbReference type="EMBL" id="X96988">
    <property type="protein sequence ID" value="CAA65714.1"/>
    <property type="molecule type" value="Genomic_DNA"/>
</dbReference>
<dbReference type="PIR" id="JC6050">
    <property type="entry name" value="JC6050"/>
</dbReference>
<dbReference type="RefSeq" id="WP_011835204.1">
    <property type="nucleotide sequence ID" value="NZ_VERW01000002.1"/>
</dbReference>
<dbReference type="SMR" id="P52991"/>
<dbReference type="OMA" id="CANRIPH"/>
<dbReference type="UniPathway" id="UPA00050">
    <property type="reaction ID" value="UER00064"/>
</dbReference>
<dbReference type="GO" id="GO:0005737">
    <property type="term" value="C:cytoplasm"/>
    <property type="evidence" value="ECO:0007669"/>
    <property type="project" value="UniProtKB-SubCell"/>
</dbReference>
<dbReference type="GO" id="GO:0005524">
    <property type="term" value="F:ATP binding"/>
    <property type="evidence" value="ECO:0007669"/>
    <property type="project" value="UniProtKB-UniRule"/>
</dbReference>
<dbReference type="GO" id="GO:0004413">
    <property type="term" value="F:homoserine kinase activity"/>
    <property type="evidence" value="ECO:0007669"/>
    <property type="project" value="UniProtKB-UniRule"/>
</dbReference>
<dbReference type="GO" id="GO:0009088">
    <property type="term" value="P:threonine biosynthetic process"/>
    <property type="evidence" value="ECO:0007669"/>
    <property type="project" value="UniProtKB-UniRule"/>
</dbReference>
<dbReference type="Gene3D" id="3.30.230.10">
    <property type="match status" value="1"/>
</dbReference>
<dbReference type="Gene3D" id="3.30.70.890">
    <property type="entry name" value="GHMP kinase, C-terminal domain"/>
    <property type="match status" value="1"/>
</dbReference>
<dbReference type="HAMAP" id="MF_00384">
    <property type="entry name" value="Homoser_kinase"/>
    <property type="match status" value="1"/>
</dbReference>
<dbReference type="InterPro" id="IPR013750">
    <property type="entry name" value="GHMP_kinase_C_dom"/>
</dbReference>
<dbReference type="InterPro" id="IPR036554">
    <property type="entry name" value="GHMP_kinase_C_sf"/>
</dbReference>
<dbReference type="InterPro" id="IPR006204">
    <property type="entry name" value="GHMP_kinase_N_dom"/>
</dbReference>
<dbReference type="InterPro" id="IPR006203">
    <property type="entry name" value="GHMP_knse_ATP-bd_CS"/>
</dbReference>
<dbReference type="InterPro" id="IPR000870">
    <property type="entry name" value="Homoserine_kinase"/>
</dbReference>
<dbReference type="InterPro" id="IPR020568">
    <property type="entry name" value="Ribosomal_Su5_D2-typ_SF"/>
</dbReference>
<dbReference type="InterPro" id="IPR014721">
    <property type="entry name" value="Ribsml_uS5_D2-typ_fold_subgr"/>
</dbReference>
<dbReference type="NCBIfam" id="TIGR00191">
    <property type="entry name" value="thrB"/>
    <property type="match status" value="1"/>
</dbReference>
<dbReference type="PANTHER" id="PTHR20861:SF1">
    <property type="entry name" value="HOMOSERINE KINASE"/>
    <property type="match status" value="1"/>
</dbReference>
<dbReference type="PANTHER" id="PTHR20861">
    <property type="entry name" value="HOMOSERINE/4-DIPHOSPHOCYTIDYL-2-C-METHYL-D-ERYTHRITOL KINASE"/>
    <property type="match status" value="1"/>
</dbReference>
<dbReference type="Pfam" id="PF08544">
    <property type="entry name" value="GHMP_kinases_C"/>
    <property type="match status" value="1"/>
</dbReference>
<dbReference type="Pfam" id="PF00288">
    <property type="entry name" value="GHMP_kinases_N"/>
    <property type="match status" value="1"/>
</dbReference>
<dbReference type="PIRSF" id="PIRSF000676">
    <property type="entry name" value="Homoser_kin"/>
    <property type="match status" value="1"/>
</dbReference>
<dbReference type="PRINTS" id="PR00958">
    <property type="entry name" value="HOMSERKINASE"/>
</dbReference>
<dbReference type="SUPFAM" id="SSF55060">
    <property type="entry name" value="GHMP Kinase, C-terminal domain"/>
    <property type="match status" value="1"/>
</dbReference>
<dbReference type="SUPFAM" id="SSF54211">
    <property type="entry name" value="Ribosomal protein S5 domain 2-like"/>
    <property type="match status" value="1"/>
</dbReference>
<dbReference type="PROSITE" id="PS00627">
    <property type="entry name" value="GHMP_KINASES_ATP"/>
    <property type="match status" value="1"/>
</dbReference>
<evidence type="ECO:0000250" key="1"/>
<evidence type="ECO:0000255" key="2"/>
<evidence type="ECO:0000305" key="3"/>
<name>KHSE_LACLC</name>
<comment type="function">
    <text evidence="1">Catalyzes the ATP-dependent phosphorylation of L-homoserine to L-homoserine phosphate.</text>
</comment>
<comment type="catalytic activity">
    <reaction>
        <text>L-homoserine + ATP = O-phospho-L-homoserine + ADP + H(+)</text>
        <dbReference type="Rhea" id="RHEA:13985"/>
        <dbReference type="ChEBI" id="CHEBI:15378"/>
        <dbReference type="ChEBI" id="CHEBI:30616"/>
        <dbReference type="ChEBI" id="CHEBI:57476"/>
        <dbReference type="ChEBI" id="CHEBI:57590"/>
        <dbReference type="ChEBI" id="CHEBI:456216"/>
        <dbReference type="EC" id="2.7.1.39"/>
    </reaction>
</comment>
<comment type="pathway">
    <text>Amino-acid biosynthesis; L-threonine biosynthesis; L-threonine from L-aspartate: step 4/5.</text>
</comment>
<comment type="subcellular location">
    <subcellularLocation>
        <location evidence="3">Cytoplasm</location>
    </subcellularLocation>
</comment>
<comment type="similarity">
    <text evidence="3">Belongs to the GHMP kinase family. Homoserine kinase subfamily.</text>
</comment>
<accession>P52991</accession>
<gene>
    <name type="primary">thrB</name>
</gene>
<proteinExistence type="inferred from homology"/>
<feature type="chain" id="PRO_0000156579" description="Homoserine kinase">
    <location>
        <begin position="1"/>
        <end position="296"/>
    </location>
</feature>
<feature type="binding site" evidence="2">
    <location>
        <begin position="84"/>
        <end position="94"/>
    </location>
    <ligand>
        <name>ATP</name>
        <dbReference type="ChEBI" id="CHEBI:30616"/>
    </ligand>
</feature>
<reference key="1">
    <citation type="journal article" date="1996" name="J. Bacteriol.">
        <title>Cloning and transcriptional analysis of two threonine biosynthetic genes from Lactococcus lactis MG1614.</title>
        <authorList>
            <person name="Madsen S.M."/>
            <person name="Albrechtsen B."/>
            <person name="Hansen E.B."/>
            <person name="Israelsen H."/>
        </authorList>
    </citation>
    <scope>NUCLEOTIDE SEQUENCE [GENOMIC DNA]</scope>
    <source>
        <strain>MG1614</strain>
    </source>
</reference>
<sequence length="296" mass="31893">MKIIVPATSANLGAGFDSIGIAVNLYLTVEVLGESRDWKIDHDLGENIPTDERNLLLTTLSAVLEDKNVALSAKFHLKMTSEVPLARGLGSSSSVIIAGIELANQLAKLNLTSDEKLKLACEIEGHPDNVAPALLGNLVIASTVAGKTSHIVADFPSCALLAFVPDYELKTVESRKVLPNELTYKEAVAASSIANVLTASLLTNNLEVAGQMMEADRFHESYRASLIPELQLLREIGHEFGAYGTYLSGAGPTVMLLVPDDKLTLLTEKIMEKNLTGHLYPLKIDNKGLQVEESVF</sequence>